<organism>
    <name type="scientific">Neisseria meningitidis serogroup C (strain 053442)</name>
    <dbReference type="NCBI Taxonomy" id="374833"/>
    <lineage>
        <taxon>Bacteria</taxon>
        <taxon>Pseudomonadati</taxon>
        <taxon>Pseudomonadota</taxon>
        <taxon>Betaproteobacteria</taxon>
        <taxon>Neisseriales</taxon>
        <taxon>Neisseriaceae</taxon>
        <taxon>Neisseria</taxon>
    </lineage>
</organism>
<reference key="1">
    <citation type="journal article" date="2008" name="Genomics">
        <title>Characterization of ST-4821 complex, a unique Neisseria meningitidis clone.</title>
        <authorList>
            <person name="Peng J."/>
            <person name="Yang L."/>
            <person name="Yang F."/>
            <person name="Yang J."/>
            <person name="Yan Y."/>
            <person name="Nie H."/>
            <person name="Zhang X."/>
            <person name="Xiong Z."/>
            <person name="Jiang Y."/>
            <person name="Cheng F."/>
            <person name="Xu X."/>
            <person name="Chen S."/>
            <person name="Sun L."/>
            <person name="Li W."/>
            <person name="Shen Y."/>
            <person name="Shao Z."/>
            <person name="Liang X."/>
            <person name="Xu J."/>
            <person name="Jin Q."/>
        </authorList>
    </citation>
    <scope>NUCLEOTIDE SEQUENCE [LARGE SCALE GENOMIC DNA]</scope>
    <source>
        <strain>053442</strain>
    </source>
</reference>
<protein>
    <recommendedName>
        <fullName evidence="1">UDP-N-acetylmuramate--L-alanine ligase</fullName>
        <ecNumber evidence="1">6.3.2.8</ecNumber>
    </recommendedName>
    <alternativeName>
        <fullName evidence="1">UDP-N-acetylmuramoyl-L-alanine synthetase</fullName>
    </alternativeName>
</protein>
<feature type="chain" id="PRO_0000336847" description="UDP-N-acetylmuramate--L-alanine ligase">
    <location>
        <begin position="1"/>
        <end position="468"/>
    </location>
</feature>
<feature type="binding site" evidence="1">
    <location>
        <begin position="112"/>
        <end position="118"/>
    </location>
    <ligand>
        <name>ATP</name>
        <dbReference type="ChEBI" id="CHEBI:30616"/>
    </ligand>
</feature>
<name>MURC_NEIM0</name>
<evidence type="ECO:0000255" key="1">
    <source>
        <dbReference type="HAMAP-Rule" id="MF_00046"/>
    </source>
</evidence>
<evidence type="ECO:0000305" key="2"/>
<gene>
    <name evidence="1" type="primary">murC</name>
    <name type="ordered locus">NMCC_1721</name>
</gene>
<dbReference type="EC" id="6.3.2.8" evidence="1"/>
<dbReference type="EMBL" id="CP000381">
    <property type="protein sequence ID" value="ABX73864.1"/>
    <property type="status" value="ALT_INIT"/>
    <property type="molecule type" value="Genomic_DNA"/>
</dbReference>
<dbReference type="SMR" id="A9M2H2"/>
<dbReference type="KEGG" id="nmn:NMCC_1721"/>
<dbReference type="HOGENOM" id="CLU_028104_2_2_4"/>
<dbReference type="UniPathway" id="UPA00219"/>
<dbReference type="Proteomes" id="UP000001177">
    <property type="component" value="Chromosome"/>
</dbReference>
<dbReference type="GO" id="GO:0005737">
    <property type="term" value="C:cytoplasm"/>
    <property type="evidence" value="ECO:0007669"/>
    <property type="project" value="UniProtKB-SubCell"/>
</dbReference>
<dbReference type="GO" id="GO:0005524">
    <property type="term" value="F:ATP binding"/>
    <property type="evidence" value="ECO:0007669"/>
    <property type="project" value="UniProtKB-UniRule"/>
</dbReference>
<dbReference type="GO" id="GO:0008763">
    <property type="term" value="F:UDP-N-acetylmuramate-L-alanine ligase activity"/>
    <property type="evidence" value="ECO:0007669"/>
    <property type="project" value="UniProtKB-UniRule"/>
</dbReference>
<dbReference type="GO" id="GO:0051301">
    <property type="term" value="P:cell division"/>
    <property type="evidence" value="ECO:0007669"/>
    <property type="project" value="UniProtKB-KW"/>
</dbReference>
<dbReference type="GO" id="GO:0071555">
    <property type="term" value="P:cell wall organization"/>
    <property type="evidence" value="ECO:0007669"/>
    <property type="project" value="UniProtKB-KW"/>
</dbReference>
<dbReference type="GO" id="GO:0009252">
    <property type="term" value="P:peptidoglycan biosynthetic process"/>
    <property type="evidence" value="ECO:0007669"/>
    <property type="project" value="UniProtKB-UniRule"/>
</dbReference>
<dbReference type="GO" id="GO:0008360">
    <property type="term" value="P:regulation of cell shape"/>
    <property type="evidence" value="ECO:0007669"/>
    <property type="project" value="UniProtKB-KW"/>
</dbReference>
<dbReference type="FunFam" id="3.40.1190.10:FF:000001">
    <property type="entry name" value="UDP-N-acetylmuramate--L-alanine ligase"/>
    <property type="match status" value="1"/>
</dbReference>
<dbReference type="Gene3D" id="3.90.190.20">
    <property type="entry name" value="Mur ligase, C-terminal domain"/>
    <property type="match status" value="1"/>
</dbReference>
<dbReference type="Gene3D" id="3.40.1190.10">
    <property type="entry name" value="Mur-like, catalytic domain"/>
    <property type="match status" value="1"/>
</dbReference>
<dbReference type="Gene3D" id="3.40.50.720">
    <property type="entry name" value="NAD(P)-binding Rossmann-like Domain"/>
    <property type="match status" value="1"/>
</dbReference>
<dbReference type="HAMAP" id="MF_00046">
    <property type="entry name" value="MurC"/>
    <property type="match status" value="1"/>
</dbReference>
<dbReference type="InterPro" id="IPR036565">
    <property type="entry name" value="Mur-like_cat_sf"/>
</dbReference>
<dbReference type="InterPro" id="IPR004101">
    <property type="entry name" value="Mur_ligase_C"/>
</dbReference>
<dbReference type="InterPro" id="IPR036615">
    <property type="entry name" value="Mur_ligase_C_dom_sf"/>
</dbReference>
<dbReference type="InterPro" id="IPR013221">
    <property type="entry name" value="Mur_ligase_cen"/>
</dbReference>
<dbReference type="InterPro" id="IPR000713">
    <property type="entry name" value="Mur_ligase_N"/>
</dbReference>
<dbReference type="InterPro" id="IPR050061">
    <property type="entry name" value="MurCDEF_pg_biosynth"/>
</dbReference>
<dbReference type="InterPro" id="IPR005758">
    <property type="entry name" value="UDP-N-AcMur_Ala_ligase_MurC"/>
</dbReference>
<dbReference type="NCBIfam" id="TIGR01082">
    <property type="entry name" value="murC"/>
    <property type="match status" value="1"/>
</dbReference>
<dbReference type="PANTHER" id="PTHR43445:SF3">
    <property type="entry name" value="UDP-N-ACETYLMURAMATE--L-ALANINE LIGASE"/>
    <property type="match status" value="1"/>
</dbReference>
<dbReference type="PANTHER" id="PTHR43445">
    <property type="entry name" value="UDP-N-ACETYLMURAMATE--L-ALANINE LIGASE-RELATED"/>
    <property type="match status" value="1"/>
</dbReference>
<dbReference type="Pfam" id="PF01225">
    <property type="entry name" value="Mur_ligase"/>
    <property type="match status" value="1"/>
</dbReference>
<dbReference type="Pfam" id="PF02875">
    <property type="entry name" value="Mur_ligase_C"/>
    <property type="match status" value="1"/>
</dbReference>
<dbReference type="Pfam" id="PF08245">
    <property type="entry name" value="Mur_ligase_M"/>
    <property type="match status" value="1"/>
</dbReference>
<dbReference type="SUPFAM" id="SSF51984">
    <property type="entry name" value="MurCD N-terminal domain"/>
    <property type="match status" value="1"/>
</dbReference>
<dbReference type="SUPFAM" id="SSF53623">
    <property type="entry name" value="MurD-like peptide ligases, catalytic domain"/>
    <property type="match status" value="1"/>
</dbReference>
<dbReference type="SUPFAM" id="SSF53244">
    <property type="entry name" value="MurD-like peptide ligases, peptide-binding domain"/>
    <property type="match status" value="1"/>
</dbReference>
<keyword id="KW-0067">ATP-binding</keyword>
<keyword id="KW-0131">Cell cycle</keyword>
<keyword id="KW-0132">Cell division</keyword>
<keyword id="KW-0133">Cell shape</keyword>
<keyword id="KW-0961">Cell wall biogenesis/degradation</keyword>
<keyword id="KW-0963">Cytoplasm</keyword>
<keyword id="KW-0436">Ligase</keyword>
<keyword id="KW-0547">Nucleotide-binding</keyword>
<keyword id="KW-0573">Peptidoglycan synthesis</keyword>
<sequence length="468" mass="50189">MKNRVTNIHFVGIGGVGMSGIAEVLHNLGFKVSGSDQARNAATEHLGSLGIQVYPGHTAEHVNGADVVVTSTAVKKENPEVVAALEQQIPVIPRALMLAELMRFRDGIAIAGTHGKTTTTSLTASILGAAGLDPTFVIGGKLNAAGTNARLGKGEYIVAEADESDASFLHLTPIMSVVTNIDEDHMDTYGHSVEKLHQAFIDFIHRMPFYGKAFLCIDSEHVRAILPKVSKPYATYGLDDTADIYATDIENVGAQMKFTVHVQMKGHEQGSFEVVLNMPGRHNVLNALAAIGVALEVGASVEAIQKGLLGFEGVGRRFQKYGDIKLPNGGTALLVDDYGHHPVEMAATLAAARGAYPEKRLVLAFQPHRYTRTRDLFEDFTKVLNTVDALVLTEVYAAGEEPIAAADSRALARAIRVLGKLEPIYCENVADLPEMLLNVLQDGDIVLNMGAGSINRVPAALLELSKQI</sequence>
<accession>A9M2H2</accession>
<proteinExistence type="inferred from homology"/>
<comment type="function">
    <text evidence="1">Cell wall formation.</text>
</comment>
<comment type="catalytic activity">
    <reaction evidence="1">
        <text>UDP-N-acetyl-alpha-D-muramate + L-alanine + ATP = UDP-N-acetyl-alpha-D-muramoyl-L-alanine + ADP + phosphate + H(+)</text>
        <dbReference type="Rhea" id="RHEA:23372"/>
        <dbReference type="ChEBI" id="CHEBI:15378"/>
        <dbReference type="ChEBI" id="CHEBI:30616"/>
        <dbReference type="ChEBI" id="CHEBI:43474"/>
        <dbReference type="ChEBI" id="CHEBI:57972"/>
        <dbReference type="ChEBI" id="CHEBI:70757"/>
        <dbReference type="ChEBI" id="CHEBI:83898"/>
        <dbReference type="ChEBI" id="CHEBI:456216"/>
        <dbReference type="EC" id="6.3.2.8"/>
    </reaction>
</comment>
<comment type="pathway">
    <text evidence="1">Cell wall biogenesis; peptidoglycan biosynthesis.</text>
</comment>
<comment type="subcellular location">
    <subcellularLocation>
        <location evidence="1">Cytoplasm</location>
    </subcellularLocation>
</comment>
<comment type="similarity">
    <text evidence="1">Belongs to the MurCDEF family.</text>
</comment>
<comment type="sequence caution" evidence="2">
    <conflict type="erroneous initiation">
        <sequence resource="EMBL-CDS" id="ABX73864"/>
    </conflict>
</comment>